<evidence type="ECO:0000255" key="1">
    <source>
        <dbReference type="HAMAP-Rule" id="MF_03056"/>
    </source>
</evidence>
<evidence type="ECO:0000256" key="2">
    <source>
        <dbReference type="SAM" id="MobiDB-lite"/>
    </source>
</evidence>
<comment type="function">
    <text evidence="1">Required for the formation of N(7)-methylguanine at position 46 (m7G46) in tRNA. In the complex, it is required to stabilize and induce conformational changes of the catalytic subunit.</text>
</comment>
<comment type="pathway">
    <text evidence="1">tRNA modification; N(7)-methylguanine-tRNA biosynthesis.</text>
</comment>
<comment type="subunit">
    <text evidence="1">Forms a heterodimer with the catalytic subunit TRM8.</text>
</comment>
<comment type="subcellular location">
    <subcellularLocation>
        <location evidence="1">Nucleus</location>
    </subcellularLocation>
</comment>
<comment type="similarity">
    <text evidence="1">Belongs to the WD repeat TRM82 family.</text>
</comment>
<dbReference type="EMBL" id="DS480380">
    <property type="protein sequence ID" value="EDO19343.1"/>
    <property type="molecule type" value="Genomic_DNA"/>
</dbReference>
<dbReference type="RefSeq" id="XP_001647201.1">
    <property type="nucleotide sequence ID" value="XM_001647151.1"/>
</dbReference>
<dbReference type="SMR" id="A7TEN6"/>
<dbReference type="FunCoup" id="A7TEN6">
    <property type="interactions" value="290"/>
</dbReference>
<dbReference type="STRING" id="436907.A7TEN6"/>
<dbReference type="GeneID" id="5547683"/>
<dbReference type="KEGG" id="vpo:Kpol_1036p90"/>
<dbReference type="eggNOG" id="KOG3914">
    <property type="taxonomic scope" value="Eukaryota"/>
</dbReference>
<dbReference type="HOGENOM" id="CLU_022082_0_0_1"/>
<dbReference type="InParanoid" id="A7TEN6"/>
<dbReference type="OMA" id="VKHWLFG"/>
<dbReference type="OrthoDB" id="339900at2759"/>
<dbReference type="PhylomeDB" id="A7TEN6"/>
<dbReference type="UniPathway" id="UPA00989"/>
<dbReference type="Proteomes" id="UP000000267">
    <property type="component" value="Unassembled WGS sequence"/>
</dbReference>
<dbReference type="GO" id="GO:0005829">
    <property type="term" value="C:cytosol"/>
    <property type="evidence" value="ECO:0007669"/>
    <property type="project" value="EnsemblFungi"/>
</dbReference>
<dbReference type="GO" id="GO:0005634">
    <property type="term" value="C:nucleus"/>
    <property type="evidence" value="ECO:0007669"/>
    <property type="project" value="UniProtKB-SubCell"/>
</dbReference>
<dbReference type="GO" id="GO:0106143">
    <property type="term" value="C:tRNA (m7G46) methyltransferase complex"/>
    <property type="evidence" value="ECO:0007669"/>
    <property type="project" value="EnsemblFungi"/>
</dbReference>
<dbReference type="GO" id="GO:0008047">
    <property type="term" value="F:enzyme activator activity"/>
    <property type="evidence" value="ECO:0007669"/>
    <property type="project" value="EnsemblFungi"/>
</dbReference>
<dbReference type="GO" id="GO:0106004">
    <property type="term" value="P:tRNA (guanine-N7)-methylation"/>
    <property type="evidence" value="ECO:0007669"/>
    <property type="project" value="UniProtKB-UniRule"/>
</dbReference>
<dbReference type="Gene3D" id="2.130.10.10">
    <property type="entry name" value="YVTN repeat-like/Quinoprotein amine dehydrogenase"/>
    <property type="match status" value="1"/>
</dbReference>
<dbReference type="HAMAP" id="MF_03056">
    <property type="entry name" value="TRM82"/>
    <property type="match status" value="1"/>
</dbReference>
<dbReference type="InterPro" id="IPR028884">
    <property type="entry name" value="Trm82"/>
</dbReference>
<dbReference type="InterPro" id="IPR015943">
    <property type="entry name" value="WD40/YVTN_repeat-like_dom_sf"/>
</dbReference>
<dbReference type="InterPro" id="IPR036322">
    <property type="entry name" value="WD40_repeat_dom_sf"/>
</dbReference>
<dbReference type="InterPro" id="IPR001680">
    <property type="entry name" value="WD40_rpt"/>
</dbReference>
<dbReference type="PANTHER" id="PTHR16288:SF0">
    <property type="entry name" value="TRNA (GUANINE-N(7)-)-METHYLTRANSFERASE NON-CATALYTIC SUBUNIT WDR4"/>
    <property type="match status" value="1"/>
</dbReference>
<dbReference type="PANTHER" id="PTHR16288">
    <property type="entry name" value="WD40 REPEAT PROTEIN 4"/>
    <property type="match status" value="1"/>
</dbReference>
<dbReference type="SMART" id="SM00320">
    <property type="entry name" value="WD40"/>
    <property type="match status" value="2"/>
</dbReference>
<dbReference type="SUPFAM" id="SSF50978">
    <property type="entry name" value="WD40 repeat-like"/>
    <property type="match status" value="1"/>
</dbReference>
<dbReference type="PROSITE" id="PS50082">
    <property type="entry name" value="WD_REPEATS_2"/>
    <property type="match status" value="1"/>
</dbReference>
<dbReference type="PROSITE" id="PS50294">
    <property type="entry name" value="WD_REPEATS_REGION"/>
    <property type="match status" value="1"/>
</dbReference>
<feature type="chain" id="PRO_0000370527" description="tRNA (guanine-N(7)-)-methyltransferase non-catalytic subunit TRM82">
    <location>
        <begin position="1"/>
        <end position="453"/>
    </location>
</feature>
<feature type="repeat" description="WD 1">
    <location>
        <begin position="103"/>
        <end position="143"/>
    </location>
</feature>
<feature type="repeat" description="WD 2">
    <location>
        <begin position="244"/>
        <end position="286"/>
    </location>
</feature>
<feature type="region of interest" description="Disordered" evidence="2">
    <location>
        <begin position="69"/>
        <end position="99"/>
    </location>
</feature>
<gene>
    <name evidence="1" type="primary">TRM82</name>
    <name type="ORF">Kpol_1036p90</name>
</gene>
<keyword id="KW-0539">Nucleus</keyword>
<keyword id="KW-1185">Reference proteome</keyword>
<keyword id="KW-0677">Repeat</keyword>
<keyword id="KW-0819">tRNA processing</keyword>
<keyword id="KW-0853">WD repeat</keyword>
<name>TRM82_VANPO</name>
<organism>
    <name type="scientific">Vanderwaltozyma polyspora (strain ATCC 22028 / DSM 70294 / BCRC 21397 / CBS 2163 / NBRC 10782 / NRRL Y-8283 / UCD 57-17)</name>
    <name type="common">Kluyveromyces polysporus</name>
    <dbReference type="NCBI Taxonomy" id="436907"/>
    <lineage>
        <taxon>Eukaryota</taxon>
        <taxon>Fungi</taxon>
        <taxon>Dikarya</taxon>
        <taxon>Ascomycota</taxon>
        <taxon>Saccharomycotina</taxon>
        <taxon>Saccharomycetes</taxon>
        <taxon>Saccharomycetales</taxon>
        <taxon>Saccharomycetaceae</taxon>
        <taxon>Vanderwaltozyma</taxon>
    </lineage>
</organism>
<accession>A7TEN6</accession>
<reference key="1">
    <citation type="journal article" date="2007" name="Proc. Natl. Acad. Sci. U.S.A.">
        <title>Independent sorting-out of thousands of duplicated gene pairs in two yeast species descended from a whole-genome duplication.</title>
        <authorList>
            <person name="Scannell D.R."/>
            <person name="Frank A.C."/>
            <person name="Conant G.C."/>
            <person name="Byrne K.P."/>
            <person name="Woolfit M."/>
            <person name="Wolfe K.H."/>
        </authorList>
    </citation>
    <scope>NUCLEOTIDE SEQUENCE [LARGE SCALE GENOMIC DNA]</scope>
    <source>
        <strain>ATCC 22028 / DSM 70294 / BCRC 21397 / CBS 2163 / NBRC 10782 / NRRL Y-8283 / UCD 57-17</strain>
    </source>
</reference>
<proteinExistence type="inferred from homology"/>
<protein>
    <recommendedName>
        <fullName evidence="1">tRNA (guanine-N(7)-)-methyltransferase non-catalytic subunit TRM82</fullName>
    </recommendedName>
    <alternativeName>
        <fullName evidence="1">Transfer RNA methyltransferase 82</fullName>
    </alternativeName>
</protein>
<sequence length="453" mass="51733">MSLIHPIQAVVSNRSGELIFAVLKNVIIAYRYDQTNGKYLEMGKWEDQFSRDEMIKIAVVKEQARQLAENEEKGIKKSKTNEGNTIEKKHDAKIPVPGPGAPPIYSQIRNLMISNDETMLLACADSDKSVLVFKIETLNNDNCLKLIKRQPFPKRPNAITITEDDKTVIIADKFGDVYSMLIESPVIENIDEEFEPILGHVSMLTGVLSTTNNGMKFVMTSDRDEHIKISHFPQSYIVDKWLFGHKEFVSSICIPSWNSNILVSAGGDHGIFLWDWIKGEKLDEFDFTDLVLPYINENHLAPDRFQNEENDLKEFAVSKLVSLPNNPYFAFFVEATKLLIILEVDQSTYKMKLLQKIVLPYYITFISTFSDDKTMGFNISLDNRESGDKDFVKFIALDTTSNTFSIKEEQSDEFNTSIVNSFSKEDSIVKVELDEVYPLYNIISLKKHGEHYS</sequence>